<sequence length="147" mass="16296">MRTFTPKPSDTERTWYVIDATDVVLGRLASQVAKLLRGKHKATFAPHVDTGDFVIVVNADKVALTGNKEQQKLAYRHSGYPGGLKATSYAELLEKRPERAVEKAIRGMVPKNSLGRAQMRKLKVYAGAEHPHGAQKPQTFEITQIAQ</sequence>
<reference key="1">
    <citation type="journal article" date="2009" name="Stand. Genomic Sci.">
        <title>Complete genome sequence of Beutenbergia cavernae type strain (HKI 0122).</title>
        <authorList>
            <person name="Land M."/>
            <person name="Pukall R."/>
            <person name="Abt B."/>
            <person name="Goker M."/>
            <person name="Rohde M."/>
            <person name="Glavina Del Rio T."/>
            <person name="Tice H."/>
            <person name="Copeland A."/>
            <person name="Cheng J.F."/>
            <person name="Lucas S."/>
            <person name="Chen F."/>
            <person name="Nolan M."/>
            <person name="Bruce D."/>
            <person name="Goodwin L."/>
            <person name="Pitluck S."/>
            <person name="Ivanova N."/>
            <person name="Mavromatis K."/>
            <person name="Ovchinnikova G."/>
            <person name="Pati A."/>
            <person name="Chen A."/>
            <person name="Palaniappan K."/>
            <person name="Hauser L."/>
            <person name="Chang Y.J."/>
            <person name="Jefferies C.C."/>
            <person name="Saunders E."/>
            <person name="Brettin T."/>
            <person name="Detter J.C."/>
            <person name="Han C."/>
            <person name="Chain P."/>
            <person name="Bristow J."/>
            <person name="Eisen J.A."/>
            <person name="Markowitz V."/>
            <person name="Hugenholtz P."/>
            <person name="Kyrpides N.C."/>
            <person name="Klenk H.P."/>
            <person name="Lapidus A."/>
        </authorList>
    </citation>
    <scope>NUCLEOTIDE SEQUENCE [LARGE SCALE GENOMIC DNA]</scope>
    <source>
        <strain>ATCC BAA-8 / DSM 12333 / CCUG 43141 / JCM 11478 / NBRC 16432 / NCIMB 13614 / HKI 0122</strain>
    </source>
</reference>
<protein>
    <recommendedName>
        <fullName evidence="1">Large ribosomal subunit protein uL13</fullName>
    </recommendedName>
    <alternativeName>
        <fullName evidence="2">50S ribosomal protein L13</fullName>
    </alternativeName>
</protein>
<evidence type="ECO:0000255" key="1">
    <source>
        <dbReference type="HAMAP-Rule" id="MF_01366"/>
    </source>
</evidence>
<evidence type="ECO:0000305" key="2"/>
<gene>
    <name evidence="1" type="primary">rplM</name>
    <name type="ordered locus">Bcav_3106</name>
</gene>
<accession>C5C020</accession>
<organism>
    <name type="scientific">Beutenbergia cavernae (strain ATCC BAA-8 / DSM 12333 / CCUG 43141 / JCM 11478 / NBRC 16432 / NCIMB 13614 / HKI 0122)</name>
    <dbReference type="NCBI Taxonomy" id="471853"/>
    <lineage>
        <taxon>Bacteria</taxon>
        <taxon>Bacillati</taxon>
        <taxon>Actinomycetota</taxon>
        <taxon>Actinomycetes</taxon>
        <taxon>Micrococcales</taxon>
        <taxon>Beutenbergiaceae</taxon>
        <taxon>Beutenbergia</taxon>
    </lineage>
</organism>
<feature type="chain" id="PRO_1000214943" description="Large ribosomal subunit protein uL13">
    <location>
        <begin position="1"/>
        <end position="147"/>
    </location>
</feature>
<name>RL13_BEUC1</name>
<dbReference type="EMBL" id="CP001618">
    <property type="protein sequence ID" value="ACQ81350.1"/>
    <property type="molecule type" value="Genomic_DNA"/>
</dbReference>
<dbReference type="RefSeq" id="WP_015883590.1">
    <property type="nucleotide sequence ID" value="NC_012669.1"/>
</dbReference>
<dbReference type="SMR" id="C5C020"/>
<dbReference type="STRING" id="471853.Bcav_3106"/>
<dbReference type="KEGG" id="bcv:Bcav_3106"/>
<dbReference type="eggNOG" id="COG0102">
    <property type="taxonomic scope" value="Bacteria"/>
</dbReference>
<dbReference type="HOGENOM" id="CLU_082184_2_2_11"/>
<dbReference type="OrthoDB" id="9801330at2"/>
<dbReference type="Proteomes" id="UP000007962">
    <property type="component" value="Chromosome"/>
</dbReference>
<dbReference type="GO" id="GO:0022625">
    <property type="term" value="C:cytosolic large ribosomal subunit"/>
    <property type="evidence" value="ECO:0007669"/>
    <property type="project" value="TreeGrafter"/>
</dbReference>
<dbReference type="GO" id="GO:0003729">
    <property type="term" value="F:mRNA binding"/>
    <property type="evidence" value="ECO:0007669"/>
    <property type="project" value="TreeGrafter"/>
</dbReference>
<dbReference type="GO" id="GO:0003735">
    <property type="term" value="F:structural constituent of ribosome"/>
    <property type="evidence" value="ECO:0007669"/>
    <property type="project" value="InterPro"/>
</dbReference>
<dbReference type="GO" id="GO:0017148">
    <property type="term" value="P:negative regulation of translation"/>
    <property type="evidence" value="ECO:0007669"/>
    <property type="project" value="TreeGrafter"/>
</dbReference>
<dbReference type="GO" id="GO:0006412">
    <property type="term" value="P:translation"/>
    <property type="evidence" value="ECO:0007669"/>
    <property type="project" value="UniProtKB-UniRule"/>
</dbReference>
<dbReference type="CDD" id="cd00392">
    <property type="entry name" value="Ribosomal_L13"/>
    <property type="match status" value="1"/>
</dbReference>
<dbReference type="FunFam" id="3.90.1180.10:FF:000001">
    <property type="entry name" value="50S ribosomal protein L13"/>
    <property type="match status" value="1"/>
</dbReference>
<dbReference type="Gene3D" id="3.90.1180.10">
    <property type="entry name" value="Ribosomal protein L13"/>
    <property type="match status" value="1"/>
</dbReference>
<dbReference type="HAMAP" id="MF_01366">
    <property type="entry name" value="Ribosomal_uL13"/>
    <property type="match status" value="1"/>
</dbReference>
<dbReference type="InterPro" id="IPR005822">
    <property type="entry name" value="Ribosomal_uL13"/>
</dbReference>
<dbReference type="InterPro" id="IPR005823">
    <property type="entry name" value="Ribosomal_uL13_bac-type"/>
</dbReference>
<dbReference type="InterPro" id="IPR023563">
    <property type="entry name" value="Ribosomal_uL13_CS"/>
</dbReference>
<dbReference type="InterPro" id="IPR036899">
    <property type="entry name" value="Ribosomal_uL13_sf"/>
</dbReference>
<dbReference type="NCBIfam" id="TIGR01066">
    <property type="entry name" value="rplM_bact"/>
    <property type="match status" value="1"/>
</dbReference>
<dbReference type="PANTHER" id="PTHR11545:SF2">
    <property type="entry name" value="LARGE RIBOSOMAL SUBUNIT PROTEIN UL13M"/>
    <property type="match status" value="1"/>
</dbReference>
<dbReference type="PANTHER" id="PTHR11545">
    <property type="entry name" value="RIBOSOMAL PROTEIN L13"/>
    <property type="match status" value="1"/>
</dbReference>
<dbReference type="Pfam" id="PF00572">
    <property type="entry name" value="Ribosomal_L13"/>
    <property type="match status" value="1"/>
</dbReference>
<dbReference type="PIRSF" id="PIRSF002181">
    <property type="entry name" value="Ribosomal_L13"/>
    <property type="match status" value="1"/>
</dbReference>
<dbReference type="SUPFAM" id="SSF52161">
    <property type="entry name" value="Ribosomal protein L13"/>
    <property type="match status" value="1"/>
</dbReference>
<dbReference type="PROSITE" id="PS00783">
    <property type="entry name" value="RIBOSOMAL_L13"/>
    <property type="match status" value="1"/>
</dbReference>
<proteinExistence type="inferred from homology"/>
<keyword id="KW-1185">Reference proteome</keyword>
<keyword id="KW-0687">Ribonucleoprotein</keyword>
<keyword id="KW-0689">Ribosomal protein</keyword>
<comment type="function">
    <text evidence="1">This protein is one of the early assembly proteins of the 50S ribosomal subunit, although it is not seen to bind rRNA by itself. It is important during the early stages of 50S assembly.</text>
</comment>
<comment type="subunit">
    <text evidence="1">Part of the 50S ribosomal subunit.</text>
</comment>
<comment type="similarity">
    <text evidence="1">Belongs to the universal ribosomal protein uL13 family.</text>
</comment>